<proteinExistence type="inferred from homology"/>
<evidence type="ECO:0000255" key="1">
    <source>
        <dbReference type="HAMAP-Rule" id="MF_00505"/>
    </source>
</evidence>
<name>HTPG_SHEHH</name>
<accession>B0TP05</accession>
<organism>
    <name type="scientific">Shewanella halifaxensis (strain HAW-EB4)</name>
    <dbReference type="NCBI Taxonomy" id="458817"/>
    <lineage>
        <taxon>Bacteria</taxon>
        <taxon>Pseudomonadati</taxon>
        <taxon>Pseudomonadota</taxon>
        <taxon>Gammaproteobacteria</taxon>
        <taxon>Alteromonadales</taxon>
        <taxon>Shewanellaceae</taxon>
        <taxon>Shewanella</taxon>
    </lineage>
</organism>
<gene>
    <name evidence="1" type="primary">htpG</name>
    <name type="ordered locus">Shal_1596</name>
</gene>
<comment type="function">
    <text evidence="1">Molecular chaperone. Has ATPase activity.</text>
</comment>
<comment type="subunit">
    <text evidence="1">Homodimer.</text>
</comment>
<comment type="subcellular location">
    <subcellularLocation>
        <location evidence="1">Cytoplasm</location>
    </subcellularLocation>
</comment>
<comment type="similarity">
    <text evidence="1">Belongs to the heat shock protein 90 family.</text>
</comment>
<reference key="1">
    <citation type="submission" date="2008-01" db="EMBL/GenBank/DDBJ databases">
        <title>Complete sequence of Shewanella halifaxensis HAW-EB4.</title>
        <authorList>
            <consortium name="US DOE Joint Genome Institute"/>
            <person name="Copeland A."/>
            <person name="Lucas S."/>
            <person name="Lapidus A."/>
            <person name="Glavina del Rio T."/>
            <person name="Dalin E."/>
            <person name="Tice H."/>
            <person name="Bruce D."/>
            <person name="Goodwin L."/>
            <person name="Pitluck S."/>
            <person name="Sims D."/>
            <person name="Brettin T."/>
            <person name="Detter J.C."/>
            <person name="Han C."/>
            <person name="Kuske C.R."/>
            <person name="Schmutz J."/>
            <person name="Larimer F."/>
            <person name="Land M."/>
            <person name="Hauser L."/>
            <person name="Kyrpides N."/>
            <person name="Kim E."/>
            <person name="Zhao J.-S."/>
            <person name="Richardson P."/>
        </authorList>
    </citation>
    <scope>NUCLEOTIDE SEQUENCE [LARGE SCALE GENOMIC DNA]</scope>
    <source>
        <strain>HAW-EB4</strain>
    </source>
</reference>
<feature type="chain" id="PRO_1000081527" description="Chaperone protein HtpG">
    <location>
        <begin position="1"/>
        <end position="639"/>
    </location>
</feature>
<feature type="region of interest" description="A; substrate-binding" evidence="1">
    <location>
        <begin position="1"/>
        <end position="347"/>
    </location>
</feature>
<feature type="region of interest" description="B" evidence="1">
    <location>
        <begin position="348"/>
        <end position="564"/>
    </location>
</feature>
<feature type="region of interest" description="C" evidence="1">
    <location>
        <begin position="565"/>
        <end position="639"/>
    </location>
</feature>
<protein>
    <recommendedName>
        <fullName evidence="1">Chaperone protein HtpG</fullName>
    </recommendedName>
    <alternativeName>
        <fullName evidence="1">Heat shock protein HtpG</fullName>
    </alternativeName>
    <alternativeName>
        <fullName evidence="1">High temperature protein G</fullName>
    </alternativeName>
</protein>
<keyword id="KW-0067">ATP-binding</keyword>
<keyword id="KW-0143">Chaperone</keyword>
<keyword id="KW-0963">Cytoplasm</keyword>
<keyword id="KW-0547">Nucleotide-binding</keyword>
<keyword id="KW-0346">Stress response</keyword>
<sequence length="639" mass="71935">MSQQETHGFQTEVKQLLHLMIHSLYSNKEIFLRELVSNAADAADKLRYEALTNDALYEGDGELRVRISADKEKGTVTIEDNGIGMTRDGVIEHLGTIAKSGTAEFFKNMSGDESKDSQLIGQFGVGFYSSFIVADRVTVRTRAAGHSADEAVLWESAGEGDFTVETITKQSRGTEITLHLRDDEKEFADDYRLRSIITKYSDHISVPVEMYEEGTPAVEATEEGGEAIPATEGHWKLMNKATALWTRNKSDVSDEEYQEFYKYISHDFTDPLLWSHNRVEGKQEYTSLLYIPAKAPWDMWNRDRKHGLKLFVQRVFVMDDAEQFMPSYLRFVQGLIDSNDLPLNVSREILQDNKVTTALRTAVTKRVLGMLEKLAKNDAEKYQSFWTEFGQVLKEGPAEDFANKERVAGLLRFASTHTGEATANVSLADYVERMKEGQSKIYFIVADSYEAAANSPHLELLRKKGIEVLLMSERIDEWLINHLTEFDGKKLHSVTRGDLELGELEDASEKEAQEKLETESEGLVKRVKDSLGDKVSAVKVTTRLTDTPACVVAGEGEMSTQMIKLMQAAGQDVPESKPTFELNPEHPLVARLNDEQDEQRFAQWSELLLQQALLSEKGSLADPSAFIKLMNQMLLASVK</sequence>
<dbReference type="EMBL" id="CP000931">
    <property type="protein sequence ID" value="ABZ76162.1"/>
    <property type="molecule type" value="Genomic_DNA"/>
</dbReference>
<dbReference type="RefSeq" id="WP_012276700.1">
    <property type="nucleotide sequence ID" value="NC_010334.1"/>
</dbReference>
<dbReference type="SMR" id="B0TP05"/>
<dbReference type="STRING" id="458817.Shal_1596"/>
<dbReference type="KEGG" id="shl:Shal_1596"/>
<dbReference type="eggNOG" id="COG0326">
    <property type="taxonomic scope" value="Bacteria"/>
</dbReference>
<dbReference type="HOGENOM" id="CLU_006684_3_0_6"/>
<dbReference type="OrthoDB" id="9802640at2"/>
<dbReference type="Proteomes" id="UP000001317">
    <property type="component" value="Chromosome"/>
</dbReference>
<dbReference type="GO" id="GO:0005737">
    <property type="term" value="C:cytoplasm"/>
    <property type="evidence" value="ECO:0007669"/>
    <property type="project" value="UniProtKB-SubCell"/>
</dbReference>
<dbReference type="GO" id="GO:0005524">
    <property type="term" value="F:ATP binding"/>
    <property type="evidence" value="ECO:0007669"/>
    <property type="project" value="UniProtKB-UniRule"/>
</dbReference>
<dbReference type="GO" id="GO:0016887">
    <property type="term" value="F:ATP hydrolysis activity"/>
    <property type="evidence" value="ECO:0007669"/>
    <property type="project" value="InterPro"/>
</dbReference>
<dbReference type="GO" id="GO:0140662">
    <property type="term" value="F:ATP-dependent protein folding chaperone"/>
    <property type="evidence" value="ECO:0007669"/>
    <property type="project" value="InterPro"/>
</dbReference>
<dbReference type="GO" id="GO:0051082">
    <property type="term" value="F:unfolded protein binding"/>
    <property type="evidence" value="ECO:0007669"/>
    <property type="project" value="UniProtKB-UniRule"/>
</dbReference>
<dbReference type="CDD" id="cd16927">
    <property type="entry name" value="HATPase_Hsp90-like"/>
    <property type="match status" value="1"/>
</dbReference>
<dbReference type="FunFam" id="3.30.230.80:FF:000002">
    <property type="entry name" value="Molecular chaperone HtpG"/>
    <property type="match status" value="1"/>
</dbReference>
<dbReference type="FunFam" id="3.30.565.10:FF:000009">
    <property type="entry name" value="Molecular chaperone HtpG"/>
    <property type="match status" value="1"/>
</dbReference>
<dbReference type="Gene3D" id="3.30.230.80">
    <property type="match status" value="1"/>
</dbReference>
<dbReference type="Gene3D" id="3.40.50.11260">
    <property type="match status" value="1"/>
</dbReference>
<dbReference type="Gene3D" id="1.20.120.790">
    <property type="entry name" value="Heat shock protein 90, C-terminal domain"/>
    <property type="match status" value="1"/>
</dbReference>
<dbReference type="Gene3D" id="3.30.565.10">
    <property type="entry name" value="Histidine kinase-like ATPase, C-terminal domain"/>
    <property type="match status" value="1"/>
</dbReference>
<dbReference type="HAMAP" id="MF_00505">
    <property type="entry name" value="HSP90"/>
    <property type="match status" value="1"/>
</dbReference>
<dbReference type="InterPro" id="IPR036890">
    <property type="entry name" value="HATPase_C_sf"/>
</dbReference>
<dbReference type="InterPro" id="IPR019805">
    <property type="entry name" value="Heat_shock_protein_90_CS"/>
</dbReference>
<dbReference type="InterPro" id="IPR037196">
    <property type="entry name" value="HSP90_C"/>
</dbReference>
<dbReference type="InterPro" id="IPR001404">
    <property type="entry name" value="Hsp90_fam"/>
</dbReference>
<dbReference type="InterPro" id="IPR020575">
    <property type="entry name" value="Hsp90_N"/>
</dbReference>
<dbReference type="InterPro" id="IPR020568">
    <property type="entry name" value="Ribosomal_Su5_D2-typ_SF"/>
</dbReference>
<dbReference type="NCBIfam" id="NF003555">
    <property type="entry name" value="PRK05218.1"/>
    <property type="match status" value="1"/>
</dbReference>
<dbReference type="PANTHER" id="PTHR11528">
    <property type="entry name" value="HEAT SHOCK PROTEIN 90 FAMILY MEMBER"/>
    <property type="match status" value="1"/>
</dbReference>
<dbReference type="Pfam" id="PF13589">
    <property type="entry name" value="HATPase_c_3"/>
    <property type="match status" value="1"/>
</dbReference>
<dbReference type="Pfam" id="PF00183">
    <property type="entry name" value="HSP90"/>
    <property type="match status" value="1"/>
</dbReference>
<dbReference type="PIRSF" id="PIRSF002583">
    <property type="entry name" value="Hsp90"/>
    <property type="match status" value="1"/>
</dbReference>
<dbReference type="PRINTS" id="PR00775">
    <property type="entry name" value="HEATSHOCK90"/>
</dbReference>
<dbReference type="SMART" id="SM00387">
    <property type="entry name" value="HATPase_c"/>
    <property type="match status" value="1"/>
</dbReference>
<dbReference type="SUPFAM" id="SSF55874">
    <property type="entry name" value="ATPase domain of HSP90 chaperone/DNA topoisomerase II/histidine kinase"/>
    <property type="match status" value="1"/>
</dbReference>
<dbReference type="SUPFAM" id="SSF110942">
    <property type="entry name" value="HSP90 C-terminal domain"/>
    <property type="match status" value="1"/>
</dbReference>
<dbReference type="SUPFAM" id="SSF54211">
    <property type="entry name" value="Ribosomal protein S5 domain 2-like"/>
    <property type="match status" value="1"/>
</dbReference>
<dbReference type="PROSITE" id="PS00298">
    <property type="entry name" value="HSP90"/>
    <property type="match status" value="1"/>
</dbReference>